<keyword id="KW-0235">DNA replication</keyword>
<keyword id="KW-0614">Plasmid</keyword>
<keyword id="KW-1185">Reference proteome</keyword>
<geneLocation type="plasmid">
    <name>sym pNGR234a</name>
</geneLocation>
<gene>
    <name type="ordered locus">NGR_a00020</name>
    <name type="ORF">y4cJ</name>
</gene>
<organism>
    <name type="scientific">Sinorhizobium fredii (strain NBRC 101917 / NGR234)</name>
    <dbReference type="NCBI Taxonomy" id="394"/>
    <lineage>
        <taxon>Bacteria</taxon>
        <taxon>Pseudomonadati</taxon>
        <taxon>Pseudomonadota</taxon>
        <taxon>Alphaproteobacteria</taxon>
        <taxon>Hyphomicrobiales</taxon>
        <taxon>Rhizobiaceae</taxon>
        <taxon>Sinorhizobium/Ensifer group</taxon>
        <taxon>Sinorhizobium</taxon>
    </lineage>
</organism>
<sequence length="326" mass="35851">MARKNLLAGLVDTAEIPHADVAPAYPMRGASKSMVRSLDELSRQAEKFLEGETVVELDPETLDGSFVSDRMGDSSEQFEELKQAIAERGQDTPILVRPHPSAADRYQIVFGHRRARVARELGRKVKAVVKALDDRTHVIAQGQENSARANLSFIERANFASHLEKLGYDRTIIGSALAANAAAISKMIAVIDRIPEETIARIGPCPAVGRERWVELSLLVGKTANEAKVKAIVSDPSFNELSTDDRFNSLFSGLNSAAKPVRKTTPKILENWQPADKTVSAKYSNSAKAFALSMKSRNAGPFGRYIADNLDRLYAEFLEQGNRKED</sequence>
<feature type="chain" id="PRO_0000200818" description="Putative replication protein B">
    <location>
        <begin position="1"/>
        <end position="326"/>
    </location>
</feature>
<dbReference type="EMBL" id="U00090">
    <property type="protein sequence ID" value="AAB92425.1"/>
    <property type="molecule type" value="Genomic_DNA"/>
</dbReference>
<dbReference type="RefSeq" id="NP_443802.1">
    <property type="nucleotide sequence ID" value="NC_000914.2"/>
</dbReference>
<dbReference type="RefSeq" id="WP_010875047.1">
    <property type="nucleotide sequence ID" value="NC_000914.2"/>
</dbReference>
<dbReference type="SMR" id="P55392"/>
<dbReference type="KEGG" id="rhi:NGR_a00020"/>
<dbReference type="PATRIC" id="fig|394.7.peg.2"/>
<dbReference type="eggNOG" id="COG1475">
    <property type="taxonomic scope" value="Bacteria"/>
</dbReference>
<dbReference type="HOGENOM" id="CLU_069128_1_0_5"/>
<dbReference type="OrthoDB" id="7908920at2"/>
<dbReference type="Proteomes" id="UP000001054">
    <property type="component" value="Plasmid pNGR234a"/>
</dbReference>
<dbReference type="GO" id="GO:0005694">
    <property type="term" value="C:chromosome"/>
    <property type="evidence" value="ECO:0007669"/>
    <property type="project" value="TreeGrafter"/>
</dbReference>
<dbReference type="GO" id="GO:0003677">
    <property type="term" value="F:DNA binding"/>
    <property type="evidence" value="ECO:0007669"/>
    <property type="project" value="InterPro"/>
</dbReference>
<dbReference type="GO" id="GO:0007059">
    <property type="term" value="P:chromosome segregation"/>
    <property type="evidence" value="ECO:0007669"/>
    <property type="project" value="TreeGrafter"/>
</dbReference>
<dbReference type="GO" id="GO:0006260">
    <property type="term" value="P:DNA replication"/>
    <property type="evidence" value="ECO:0007669"/>
    <property type="project" value="UniProtKB-KW"/>
</dbReference>
<dbReference type="CDD" id="cd16405">
    <property type="entry name" value="RepB_like_N"/>
    <property type="match status" value="1"/>
</dbReference>
<dbReference type="Gene3D" id="3.90.1530.30">
    <property type="match status" value="1"/>
</dbReference>
<dbReference type="InterPro" id="IPR050336">
    <property type="entry name" value="Chromosome_partition/occlusion"/>
</dbReference>
<dbReference type="InterPro" id="IPR004437">
    <property type="entry name" value="ParB/RepB/Spo0J"/>
</dbReference>
<dbReference type="InterPro" id="IPR003115">
    <property type="entry name" value="ParB/Sulfiredoxin_dom"/>
</dbReference>
<dbReference type="InterPro" id="IPR036086">
    <property type="entry name" value="ParB/Sulfiredoxin_sf"/>
</dbReference>
<dbReference type="InterPro" id="IPR017819">
    <property type="entry name" value="Plasmid_partition_RepB"/>
</dbReference>
<dbReference type="InterPro" id="IPR011111">
    <property type="entry name" value="Plasmid_RepB"/>
</dbReference>
<dbReference type="InterPro" id="IPR037972">
    <property type="entry name" value="RepB_N"/>
</dbReference>
<dbReference type="NCBIfam" id="TIGR00180">
    <property type="entry name" value="parB_part"/>
    <property type="match status" value="1"/>
</dbReference>
<dbReference type="NCBIfam" id="TIGR03454">
    <property type="entry name" value="partition_RepB"/>
    <property type="match status" value="1"/>
</dbReference>
<dbReference type="PANTHER" id="PTHR33375">
    <property type="entry name" value="CHROMOSOME-PARTITIONING PROTEIN PARB-RELATED"/>
    <property type="match status" value="1"/>
</dbReference>
<dbReference type="PANTHER" id="PTHR33375:SF1">
    <property type="entry name" value="CHROMOSOME-PARTITIONING PROTEIN PARB-RELATED"/>
    <property type="match status" value="1"/>
</dbReference>
<dbReference type="Pfam" id="PF02195">
    <property type="entry name" value="ParBc"/>
    <property type="match status" value="1"/>
</dbReference>
<dbReference type="Pfam" id="PF07506">
    <property type="entry name" value="RepB"/>
    <property type="match status" value="1"/>
</dbReference>
<dbReference type="SMART" id="SM00470">
    <property type="entry name" value="ParB"/>
    <property type="match status" value="1"/>
</dbReference>
<dbReference type="SUPFAM" id="SSF109709">
    <property type="entry name" value="KorB DNA-binding domain-like"/>
    <property type="match status" value="1"/>
</dbReference>
<dbReference type="SUPFAM" id="SSF110849">
    <property type="entry name" value="ParB/Sulfiredoxin"/>
    <property type="match status" value="1"/>
</dbReference>
<proteinExistence type="inferred from homology"/>
<reference key="1">
    <citation type="journal article" date="1997" name="Nature">
        <title>Molecular basis of symbiosis between Rhizobium and legumes.</title>
        <authorList>
            <person name="Freiberg C.A."/>
            <person name="Fellay R."/>
            <person name="Bairoch A."/>
            <person name="Broughton W.J."/>
            <person name="Rosenthal A."/>
            <person name="Perret X."/>
        </authorList>
    </citation>
    <scope>NUCLEOTIDE SEQUENCE [LARGE SCALE GENOMIC DNA]</scope>
    <source>
        <strain>NBRC 101917 / NGR234</strain>
    </source>
</reference>
<reference key="2">
    <citation type="journal article" date="2009" name="Appl. Environ. Microbiol.">
        <title>Rhizobium sp. strain NGR234 possesses a remarkable number of secretion systems.</title>
        <authorList>
            <person name="Schmeisser C."/>
            <person name="Liesegang H."/>
            <person name="Krysciak D."/>
            <person name="Bakkou N."/>
            <person name="Le Quere A."/>
            <person name="Wollherr A."/>
            <person name="Heinemeyer I."/>
            <person name="Morgenstern B."/>
            <person name="Pommerening-Roeser A."/>
            <person name="Flores M."/>
            <person name="Palacios R."/>
            <person name="Brenner S."/>
            <person name="Gottschalk G."/>
            <person name="Schmitz R.A."/>
            <person name="Broughton W.J."/>
            <person name="Perret X."/>
            <person name="Strittmatter A.W."/>
            <person name="Streit W.R."/>
        </authorList>
    </citation>
    <scope>NUCLEOTIDE SEQUENCE [LARGE SCALE GENOMIC DNA]</scope>
    <source>
        <strain>NBRC 101917 / NGR234</strain>
    </source>
</reference>
<comment type="similarity">
    <text evidence="1">Belongs to the ParB family.</text>
</comment>
<evidence type="ECO:0000305" key="1"/>
<name>Y4CJ_SINFN</name>
<protein>
    <recommendedName>
        <fullName>Putative replication protein B</fullName>
    </recommendedName>
</protein>
<accession>P55392</accession>